<keyword id="KW-0002">3D-structure</keyword>
<keyword id="KW-0687">Ribonucleoprotein</keyword>
<keyword id="KW-0689">Ribosomal protein</keyword>
<keyword id="KW-0694">RNA-binding</keyword>
<keyword id="KW-0699">rRNA-binding</keyword>
<organism>
    <name type="scientific">Thermus thermophilus</name>
    <dbReference type="NCBI Taxonomy" id="274"/>
    <lineage>
        <taxon>Bacteria</taxon>
        <taxon>Thermotogati</taxon>
        <taxon>Deinococcota</taxon>
        <taxon>Deinococci</taxon>
        <taxon>Thermales</taxon>
        <taxon>Thermaceae</taxon>
        <taxon>Thermus</taxon>
    </lineage>
</organism>
<accession>P80382</accession>
<accession>Q9LCZ0</accession>
<dbReference type="EMBL" id="AF146075">
    <property type="protein sequence ID" value="AAF27297.1"/>
    <property type="molecule type" value="Genomic_DNA"/>
</dbReference>
<dbReference type="PDB" id="2VQE">
    <property type="method" value="X-ray"/>
    <property type="resolution" value="2.50 A"/>
    <property type="chains" value="R=1-88"/>
</dbReference>
<dbReference type="PDB" id="2VQF">
    <property type="method" value="X-ray"/>
    <property type="resolution" value="2.90 A"/>
    <property type="chains" value="R=1-88"/>
</dbReference>
<dbReference type="PDB" id="5A9Z">
    <property type="method" value="EM"/>
    <property type="resolution" value="4.70 A"/>
    <property type="chains" value="BV=16-88"/>
</dbReference>
<dbReference type="PDB" id="5IMQ">
    <property type="method" value="EM"/>
    <property type="resolution" value="3.80 A"/>
    <property type="chains" value="V=1-88"/>
</dbReference>
<dbReference type="PDB" id="5IMR">
    <property type="method" value="EM"/>
    <property type="chains" value="V=1-88"/>
</dbReference>
<dbReference type="PDBsum" id="2VQE"/>
<dbReference type="PDBsum" id="2VQF"/>
<dbReference type="PDBsum" id="5A9Z"/>
<dbReference type="PDBsum" id="5IMQ"/>
<dbReference type="PDBsum" id="5IMR"/>
<dbReference type="SMR" id="P80382"/>
<dbReference type="GO" id="GO:1990904">
    <property type="term" value="C:ribonucleoprotein complex"/>
    <property type="evidence" value="ECO:0007669"/>
    <property type="project" value="UniProtKB-KW"/>
</dbReference>
<dbReference type="GO" id="GO:0005840">
    <property type="term" value="C:ribosome"/>
    <property type="evidence" value="ECO:0007669"/>
    <property type="project" value="UniProtKB-KW"/>
</dbReference>
<dbReference type="GO" id="GO:0070181">
    <property type="term" value="F:small ribosomal subunit rRNA binding"/>
    <property type="evidence" value="ECO:0007669"/>
    <property type="project" value="TreeGrafter"/>
</dbReference>
<dbReference type="GO" id="GO:0003735">
    <property type="term" value="F:structural constituent of ribosome"/>
    <property type="evidence" value="ECO:0007669"/>
    <property type="project" value="InterPro"/>
</dbReference>
<dbReference type="GO" id="GO:0006412">
    <property type="term" value="P:translation"/>
    <property type="evidence" value="ECO:0007669"/>
    <property type="project" value="UniProtKB-UniRule"/>
</dbReference>
<dbReference type="FunFam" id="4.10.640.10:FF:000015">
    <property type="entry name" value="30S ribosomal protein S18"/>
    <property type="match status" value="1"/>
</dbReference>
<dbReference type="Gene3D" id="4.10.640.10">
    <property type="entry name" value="Ribosomal protein S18"/>
    <property type="match status" value="1"/>
</dbReference>
<dbReference type="HAMAP" id="MF_00270">
    <property type="entry name" value="Ribosomal_bS18"/>
    <property type="match status" value="1"/>
</dbReference>
<dbReference type="InterPro" id="IPR001648">
    <property type="entry name" value="Ribosomal_bS18"/>
</dbReference>
<dbReference type="InterPro" id="IPR018275">
    <property type="entry name" value="Ribosomal_bS18_CS"/>
</dbReference>
<dbReference type="InterPro" id="IPR036870">
    <property type="entry name" value="Ribosomal_bS18_sf"/>
</dbReference>
<dbReference type="NCBIfam" id="TIGR00165">
    <property type="entry name" value="S18"/>
    <property type="match status" value="1"/>
</dbReference>
<dbReference type="PANTHER" id="PTHR13479">
    <property type="entry name" value="30S RIBOSOMAL PROTEIN S18"/>
    <property type="match status" value="1"/>
</dbReference>
<dbReference type="PANTHER" id="PTHR13479:SF40">
    <property type="entry name" value="SMALL RIBOSOMAL SUBUNIT PROTEIN BS18M"/>
    <property type="match status" value="1"/>
</dbReference>
<dbReference type="Pfam" id="PF01084">
    <property type="entry name" value="Ribosomal_S18"/>
    <property type="match status" value="1"/>
</dbReference>
<dbReference type="PRINTS" id="PR00974">
    <property type="entry name" value="RIBOSOMALS18"/>
</dbReference>
<dbReference type="SUPFAM" id="SSF46911">
    <property type="entry name" value="Ribosomal protein S18"/>
    <property type="match status" value="1"/>
</dbReference>
<dbReference type="PROSITE" id="PS00057">
    <property type="entry name" value="RIBOSOMAL_S18"/>
    <property type="match status" value="1"/>
</dbReference>
<comment type="function">
    <text evidence="2">Binds as a heterodimer with protein bS6 to the central domain of the 16S rRNA, where it helps stabilize the platform of the 30S subunit.</text>
</comment>
<comment type="subunit">
    <text evidence="2">Part of the 30S ribosomal subunit. Forms a tight heterodimer with protein bS6.</text>
</comment>
<comment type="similarity">
    <text evidence="4">Belongs to the bacterial ribosomal protein bS18 family.</text>
</comment>
<sequence length="88" mass="10217">MSTKNAKPKKEAQRRPSRKAKVKATLGEFDLRDYRNVEVLKRFLSETGKILPRRRTGLSGKEQRILAKTIKRARILGLLPFTEKLVRK</sequence>
<proteinExistence type="evidence at protein level"/>
<name>RS18_THETH</name>
<gene>
    <name type="primary">rpsR</name>
    <name type="synonym">rps18</name>
</gene>
<reference key="1">
    <citation type="submission" date="1999-04" db="EMBL/GenBank/DDBJ databases">
        <title>Sequencing and analysis of the Thermus thermophilus gene cluster equivalent to the S6 operon.</title>
        <authorList>
            <person name="Shcherbakov D.V."/>
            <person name="Cherepanova E.A."/>
            <person name="Garber M.B."/>
        </authorList>
    </citation>
    <scope>NUCLEOTIDE SEQUENCE [GENOMIC DNA]</scope>
    <source>
        <strain>VK1</strain>
    </source>
</reference>
<feature type="initiator methionine" description="Removed" evidence="1">
    <location>
        <position position="1"/>
    </location>
</feature>
<feature type="chain" id="PRO_0000111251" description="Small ribosomal subunit protein bS18">
    <location>
        <begin position="2"/>
        <end position="88"/>
    </location>
</feature>
<feature type="region of interest" description="Disordered" evidence="3">
    <location>
        <begin position="1"/>
        <end position="22"/>
    </location>
</feature>
<feature type="turn" evidence="5">
    <location>
        <begin position="22"/>
        <end position="24"/>
    </location>
</feature>
<feature type="helix" evidence="5">
    <location>
        <begin position="37"/>
        <end position="40"/>
    </location>
</feature>
<feature type="helix" evidence="5">
    <location>
        <begin position="41"/>
        <end position="43"/>
    </location>
</feature>
<feature type="strand" evidence="5">
    <location>
        <begin position="46"/>
        <end position="48"/>
    </location>
</feature>
<feature type="helix" evidence="5">
    <location>
        <begin position="53"/>
        <end position="56"/>
    </location>
</feature>
<feature type="helix" evidence="5">
    <location>
        <begin position="60"/>
        <end position="75"/>
    </location>
</feature>
<protein>
    <recommendedName>
        <fullName evidence="4">Small ribosomal subunit protein bS18</fullName>
    </recommendedName>
    <alternativeName>
        <fullName>30S ribosomal protein S18</fullName>
    </alternativeName>
</protein>
<evidence type="ECO:0000250" key="1"/>
<evidence type="ECO:0000255" key="2">
    <source>
        <dbReference type="HAMAP-Rule" id="MF_00270"/>
    </source>
</evidence>
<evidence type="ECO:0000256" key="3">
    <source>
        <dbReference type="SAM" id="MobiDB-lite"/>
    </source>
</evidence>
<evidence type="ECO:0000305" key="4"/>
<evidence type="ECO:0007829" key="5">
    <source>
        <dbReference type="PDB" id="2VQE"/>
    </source>
</evidence>